<organism>
    <name type="scientific">Streptococcus agalactiae serotype V (strain ATCC BAA-611 / 2603 V/R)</name>
    <dbReference type="NCBI Taxonomy" id="208435"/>
    <lineage>
        <taxon>Bacteria</taxon>
        <taxon>Bacillati</taxon>
        <taxon>Bacillota</taxon>
        <taxon>Bacilli</taxon>
        <taxon>Lactobacillales</taxon>
        <taxon>Streptococcaceae</taxon>
        <taxon>Streptococcus</taxon>
    </lineage>
</organism>
<keyword id="KW-0961">Cell wall biogenesis/degradation</keyword>
<keyword id="KW-0548">Nucleotidyltransferase</keyword>
<keyword id="KW-1185">Reference proteome</keyword>
<keyword id="KW-0777">Teichoic acid biosynthesis</keyword>
<keyword id="KW-0808">Transferase</keyword>
<gene>
    <name evidence="1" type="primary">tarI</name>
    <name type="ordered locus">SAG1417</name>
</gene>
<name>TARI_STRA5</name>
<comment type="function">
    <text evidence="1">Catalyzes the transfer of the cytidylyl group of CTP to D-ribitol 5-phosphate.</text>
</comment>
<comment type="catalytic activity">
    <reaction evidence="1">
        <text>D-ribitol 5-phosphate + CTP + H(+) = CDP-L-ribitol + diphosphate</text>
        <dbReference type="Rhea" id="RHEA:12456"/>
        <dbReference type="ChEBI" id="CHEBI:15378"/>
        <dbReference type="ChEBI" id="CHEBI:33019"/>
        <dbReference type="ChEBI" id="CHEBI:37563"/>
        <dbReference type="ChEBI" id="CHEBI:57608"/>
        <dbReference type="ChEBI" id="CHEBI:57695"/>
        <dbReference type="EC" id="2.7.7.40"/>
    </reaction>
</comment>
<comment type="pathway">
    <text evidence="1">Cell wall biogenesis; poly(ribitol phosphate) teichoic acid biosynthesis.</text>
</comment>
<comment type="similarity">
    <text evidence="1">Belongs to the IspD/TarI cytidylyltransferase family. TarI subfamily.</text>
</comment>
<feature type="chain" id="PRO_0000075628" description="Ribitol-5-phosphate cytidylyltransferase">
    <location>
        <begin position="1"/>
        <end position="240"/>
    </location>
</feature>
<feature type="binding site" evidence="1">
    <location>
        <begin position="8"/>
        <end position="11"/>
    </location>
    <ligand>
        <name>CTP</name>
        <dbReference type="ChEBI" id="CHEBI:37563"/>
    </ligand>
</feature>
<feature type="binding site" evidence="1">
    <location>
        <begin position="81"/>
        <end position="87"/>
    </location>
    <ligand>
        <name>CTP</name>
        <dbReference type="ChEBI" id="CHEBI:37563"/>
    </ligand>
</feature>
<feature type="site" description="Transition state stabilizer" evidence="1">
    <location>
        <position position="15"/>
    </location>
</feature>
<feature type="site" description="Transition state stabilizer" evidence="1">
    <location>
        <position position="23"/>
    </location>
</feature>
<feature type="site" description="Positions ribitol 5-phosphate for the nucleophilic attack" evidence="1">
    <location>
        <position position="158"/>
    </location>
</feature>
<feature type="site" description="Positions ribitol 5-phosphate for the nucleophilic attack" evidence="1">
    <location>
        <position position="215"/>
    </location>
</feature>
<reference key="1">
    <citation type="journal article" date="2002" name="Proc. Natl. Acad. Sci. U.S.A.">
        <title>Complete genome sequence and comparative genomic analysis of an emerging human pathogen, serotype V Streptococcus agalactiae.</title>
        <authorList>
            <person name="Tettelin H."/>
            <person name="Masignani V."/>
            <person name="Cieslewicz M.J."/>
            <person name="Eisen J.A."/>
            <person name="Peterson S.N."/>
            <person name="Wessels M.R."/>
            <person name="Paulsen I.T."/>
            <person name="Nelson K.E."/>
            <person name="Margarit I."/>
            <person name="Read T.D."/>
            <person name="Madoff L.C."/>
            <person name="Wolf A.M."/>
            <person name="Beanan M.J."/>
            <person name="Brinkac L.M."/>
            <person name="Daugherty S.C."/>
            <person name="DeBoy R.T."/>
            <person name="Durkin A.S."/>
            <person name="Kolonay J.F."/>
            <person name="Madupu R."/>
            <person name="Lewis M.R."/>
            <person name="Radune D."/>
            <person name="Fedorova N.B."/>
            <person name="Scanlan D."/>
            <person name="Khouri H.M."/>
            <person name="Mulligan S."/>
            <person name="Carty H.A."/>
            <person name="Cline R.T."/>
            <person name="Van Aken S.E."/>
            <person name="Gill J."/>
            <person name="Scarselli M."/>
            <person name="Mora M."/>
            <person name="Iacobini E.T."/>
            <person name="Brettoni C."/>
            <person name="Galli G."/>
            <person name="Mariani M."/>
            <person name="Vegni F."/>
            <person name="Maione D."/>
            <person name="Rinaudo D."/>
            <person name="Rappuoli R."/>
            <person name="Telford J.L."/>
            <person name="Kasper D.L."/>
            <person name="Grandi G."/>
            <person name="Fraser C.M."/>
        </authorList>
    </citation>
    <scope>NUCLEOTIDE SEQUENCE [LARGE SCALE GENOMIC DNA]</scope>
    <source>
        <strain>ATCC BAA-611 / 2603 V/R</strain>
    </source>
</reference>
<accession>Q8DYQ7</accession>
<evidence type="ECO:0000255" key="1">
    <source>
        <dbReference type="HAMAP-Rule" id="MF_02068"/>
    </source>
</evidence>
<dbReference type="EC" id="2.7.7.40" evidence="1"/>
<dbReference type="EMBL" id="AE009948">
    <property type="protein sequence ID" value="AAN00287.1"/>
    <property type="molecule type" value="Genomic_DNA"/>
</dbReference>
<dbReference type="RefSeq" id="NP_688414.1">
    <property type="nucleotide sequence ID" value="NC_004116.1"/>
</dbReference>
<dbReference type="RefSeq" id="WP_000981011.1">
    <property type="nucleotide sequence ID" value="NC_004116.1"/>
</dbReference>
<dbReference type="SMR" id="Q8DYQ7"/>
<dbReference type="STRING" id="208435.SAG1417"/>
<dbReference type="KEGG" id="sag:SAG1417"/>
<dbReference type="PATRIC" id="fig|208435.3.peg.1425"/>
<dbReference type="HOGENOM" id="CLU_061281_2_3_9"/>
<dbReference type="OrthoDB" id="9806837at2"/>
<dbReference type="UniPathway" id="UPA00790"/>
<dbReference type="Proteomes" id="UP000000821">
    <property type="component" value="Chromosome"/>
</dbReference>
<dbReference type="GO" id="GO:0005829">
    <property type="term" value="C:cytosol"/>
    <property type="evidence" value="ECO:0007669"/>
    <property type="project" value="TreeGrafter"/>
</dbReference>
<dbReference type="GO" id="GO:0047349">
    <property type="term" value="F:D-ribitol-5-phosphate cytidylyltransferase activity"/>
    <property type="evidence" value="ECO:0007669"/>
    <property type="project" value="UniProtKB-UniRule"/>
</dbReference>
<dbReference type="GO" id="GO:0071555">
    <property type="term" value="P:cell wall organization"/>
    <property type="evidence" value="ECO:0007669"/>
    <property type="project" value="UniProtKB-KW"/>
</dbReference>
<dbReference type="GO" id="GO:0008299">
    <property type="term" value="P:isoprenoid biosynthetic process"/>
    <property type="evidence" value="ECO:0007669"/>
    <property type="project" value="InterPro"/>
</dbReference>
<dbReference type="GO" id="GO:1902012">
    <property type="term" value="P:poly(ribitol phosphate) teichoic acid biosynthetic process"/>
    <property type="evidence" value="ECO:0007669"/>
    <property type="project" value="UniProtKB-UniRule"/>
</dbReference>
<dbReference type="CDD" id="cd02516">
    <property type="entry name" value="CDP-ME_synthetase"/>
    <property type="match status" value="1"/>
</dbReference>
<dbReference type="FunFam" id="3.90.550.10:FF:000003">
    <property type="entry name" value="2-C-methyl-D-erythritol 4-phosphate cytidylyltransferase"/>
    <property type="match status" value="1"/>
</dbReference>
<dbReference type="Gene3D" id="3.90.550.10">
    <property type="entry name" value="Spore Coat Polysaccharide Biosynthesis Protein SpsA, Chain A"/>
    <property type="match status" value="1"/>
</dbReference>
<dbReference type="HAMAP" id="MF_02068">
    <property type="entry name" value="TarI"/>
    <property type="match status" value="1"/>
</dbReference>
<dbReference type="InterPro" id="IPR034683">
    <property type="entry name" value="IspD/TarI"/>
</dbReference>
<dbReference type="InterPro" id="IPR018294">
    <property type="entry name" value="ISPD_synthase_CS"/>
</dbReference>
<dbReference type="InterPro" id="IPR029044">
    <property type="entry name" value="Nucleotide-diphossugar_trans"/>
</dbReference>
<dbReference type="InterPro" id="IPR034709">
    <property type="entry name" value="TarI"/>
</dbReference>
<dbReference type="PANTHER" id="PTHR43015">
    <property type="entry name" value="D-RIBITOL-5-PHOSPHATE CYTIDYLYLTRANSFERASE"/>
    <property type="match status" value="1"/>
</dbReference>
<dbReference type="PANTHER" id="PTHR43015:SF1">
    <property type="entry name" value="D-RIBITOL-5-PHOSPHATE CYTIDYLYLTRANSFERASE"/>
    <property type="match status" value="1"/>
</dbReference>
<dbReference type="Pfam" id="PF01128">
    <property type="entry name" value="IspD"/>
    <property type="match status" value="1"/>
</dbReference>
<dbReference type="SUPFAM" id="SSF53448">
    <property type="entry name" value="Nucleotide-diphospho-sugar transferases"/>
    <property type="match status" value="1"/>
</dbReference>
<dbReference type="PROSITE" id="PS01295">
    <property type="entry name" value="ISPD"/>
    <property type="match status" value="1"/>
</dbReference>
<proteinExistence type="inferred from homology"/>
<sequence>MMNIGVIFAGGVGRRMNTKGKPKQFLEVHGKPIIVHTIDIFQNTEAIDAVVVVCVSDWLDYMNNLVERFNLTKVKAVVAGGETGQMSIFKGLEAAEQLATDDAVVLIHDGVRPLINEEVINANIQSVKETGSAVTSVRAKETVVLVNDSSKISEVVDRTRSFIAKAPQSFYLSDILSVERDAISKGITDAIDSSTLMGMYNRELTIVEGPYENIKITTPDDFYMFKALYDARENEQIYGM</sequence>
<protein>
    <recommendedName>
        <fullName evidence="1">Ribitol-5-phosphate cytidylyltransferase</fullName>
        <ecNumber evidence="1">2.7.7.40</ecNumber>
    </recommendedName>
</protein>